<organism>
    <name type="scientific">Lactobacillus johnsonii (strain CNCM I-12250 / La1 / NCC 533)</name>
    <dbReference type="NCBI Taxonomy" id="257314"/>
    <lineage>
        <taxon>Bacteria</taxon>
        <taxon>Bacillati</taxon>
        <taxon>Bacillota</taxon>
        <taxon>Bacilli</taxon>
        <taxon>Lactobacillales</taxon>
        <taxon>Lactobacillaceae</taxon>
        <taxon>Lactobacillus</taxon>
    </lineage>
</organism>
<feature type="chain" id="PRO_1000055607" description="Large ribosomal subunit protein uL14">
    <location>
        <begin position="1"/>
        <end position="122"/>
    </location>
</feature>
<proteinExistence type="inferred from homology"/>
<comment type="function">
    <text evidence="1">Binds to 23S rRNA. Forms part of two intersubunit bridges in the 70S ribosome.</text>
</comment>
<comment type="subunit">
    <text evidence="1">Part of the 50S ribosomal subunit. Forms a cluster with proteins L3 and L19. In the 70S ribosome, L14 and L19 interact and together make contacts with the 16S rRNA in bridges B5 and B8.</text>
</comment>
<comment type="similarity">
    <text evidence="1">Belongs to the universal ribosomal protein uL14 family.</text>
</comment>
<evidence type="ECO:0000255" key="1">
    <source>
        <dbReference type="HAMAP-Rule" id="MF_01367"/>
    </source>
</evidence>
<evidence type="ECO:0000305" key="2"/>
<name>RL14_LACJO</name>
<reference key="1">
    <citation type="journal article" date="2004" name="Proc. Natl. Acad. Sci. U.S.A.">
        <title>The genome sequence of the probiotic intestinal bacterium Lactobacillus johnsonii NCC 533.</title>
        <authorList>
            <person name="Pridmore R.D."/>
            <person name="Berger B."/>
            <person name="Desiere F."/>
            <person name="Vilanova D."/>
            <person name="Barretto C."/>
            <person name="Pittet A.-C."/>
            <person name="Zwahlen M.-C."/>
            <person name="Rouvet M."/>
            <person name="Altermann E."/>
            <person name="Barrangou R."/>
            <person name="Mollet B."/>
            <person name="Mercenier A."/>
            <person name="Klaenhammer T."/>
            <person name="Arigoni F."/>
            <person name="Schell M.A."/>
        </authorList>
    </citation>
    <scope>NUCLEOTIDE SEQUENCE [LARGE SCALE GENOMIC DNA]</scope>
    <source>
        <strain>CNCM I-1225 / La1 / NCC 533</strain>
    </source>
</reference>
<dbReference type="EMBL" id="AE017198">
    <property type="protein sequence ID" value="AAS08335.1"/>
    <property type="molecule type" value="Genomic_DNA"/>
</dbReference>
<dbReference type="RefSeq" id="WP_003647826.1">
    <property type="nucleotide sequence ID" value="NC_005362.1"/>
</dbReference>
<dbReference type="SMR" id="Q74L79"/>
<dbReference type="GeneID" id="83569764"/>
<dbReference type="KEGG" id="ljo:LJ_0348"/>
<dbReference type="eggNOG" id="COG0093">
    <property type="taxonomic scope" value="Bacteria"/>
</dbReference>
<dbReference type="HOGENOM" id="CLU_095071_2_1_9"/>
<dbReference type="Proteomes" id="UP000000581">
    <property type="component" value="Chromosome"/>
</dbReference>
<dbReference type="GO" id="GO:0022625">
    <property type="term" value="C:cytosolic large ribosomal subunit"/>
    <property type="evidence" value="ECO:0007669"/>
    <property type="project" value="TreeGrafter"/>
</dbReference>
<dbReference type="GO" id="GO:0070180">
    <property type="term" value="F:large ribosomal subunit rRNA binding"/>
    <property type="evidence" value="ECO:0007669"/>
    <property type="project" value="TreeGrafter"/>
</dbReference>
<dbReference type="GO" id="GO:0003735">
    <property type="term" value="F:structural constituent of ribosome"/>
    <property type="evidence" value="ECO:0007669"/>
    <property type="project" value="InterPro"/>
</dbReference>
<dbReference type="GO" id="GO:0006412">
    <property type="term" value="P:translation"/>
    <property type="evidence" value="ECO:0007669"/>
    <property type="project" value="UniProtKB-UniRule"/>
</dbReference>
<dbReference type="CDD" id="cd00337">
    <property type="entry name" value="Ribosomal_uL14"/>
    <property type="match status" value="1"/>
</dbReference>
<dbReference type="FunFam" id="2.40.150.20:FF:000001">
    <property type="entry name" value="50S ribosomal protein L14"/>
    <property type="match status" value="1"/>
</dbReference>
<dbReference type="Gene3D" id="2.40.150.20">
    <property type="entry name" value="Ribosomal protein L14"/>
    <property type="match status" value="1"/>
</dbReference>
<dbReference type="HAMAP" id="MF_01367">
    <property type="entry name" value="Ribosomal_uL14"/>
    <property type="match status" value="1"/>
</dbReference>
<dbReference type="InterPro" id="IPR000218">
    <property type="entry name" value="Ribosomal_uL14"/>
</dbReference>
<dbReference type="InterPro" id="IPR005745">
    <property type="entry name" value="Ribosomal_uL14_bac-type"/>
</dbReference>
<dbReference type="InterPro" id="IPR019972">
    <property type="entry name" value="Ribosomal_uL14_CS"/>
</dbReference>
<dbReference type="InterPro" id="IPR036853">
    <property type="entry name" value="Ribosomal_uL14_sf"/>
</dbReference>
<dbReference type="NCBIfam" id="TIGR01067">
    <property type="entry name" value="rplN_bact"/>
    <property type="match status" value="1"/>
</dbReference>
<dbReference type="PANTHER" id="PTHR11761">
    <property type="entry name" value="50S/60S RIBOSOMAL PROTEIN L14/L23"/>
    <property type="match status" value="1"/>
</dbReference>
<dbReference type="PANTHER" id="PTHR11761:SF3">
    <property type="entry name" value="LARGE RIBOSOMAL SUBUNIT PROTEIN UL14M"/>
    <property type="match status" value="1"/>
</dbReference>
<dbReference type="Pfam" id="PF00238">
    <property type="entry name" value="Ribosomal_L14"/>
    <property type="match status" value="1"/>
</dbReference>
<dbReference type="SMART" id="SM01374">
    <property type="entry name" value="Ribosomal_L14"/>
    <property type="match status" value="1"/>
</dbReference>
<dbReference type="SUPFAM" id="SSF50193">
    <property type="entry name" value="Ribosomal protein L14"/>
    <property type="match status" value="1"/>
</dbReference>
<dbReference type="PROSITE" id="PS00049">
    <property type="entry name" value="RIBOSOMAL_L14"/>
    <property type="match status" value="1"/>
</dbReference>
<protein>
    <recommendedName>
        <fullName evidence="1">Large ribosomal subunit protein uL14</fullName>
    </recommendedName>
    <alternativeName>
        <fullName evidence="2">50S ribosomal protein L14</fullName>
    </alternativeName>
</protein>
<keyword id="KW-0687">Ribonucleoprotein</keyword>
<keyword id="KW-0689">Ribosomal protein</keyword>
<keyword id="KW-0694">RNA-binding</keyword>
<keyword id="KW-0699">rRNA-binding</keyword>
<accession>Q74L79</accession>
<gene>
    <name evidence="1" type="primary">rplN</name>
    <name type="ordered locus">LJ_0348</name>
</gene>
<sequence>MIQHESRLKVADNSGARELLVIKILGGSKRKTGNIGDIVVAAVKQATPGGVVKKGDVVKAVIVRTKSGARREDGSYIKFDENAAVVINADKSPRGTRIFGPVARELREHDFMKIVSLAPEVL</sequence>